<reference key="1">
    <citation type="submission" date="2008-05" db="EMBL/GenBank/DDBJ databases">
        <title>Complete sequence of Rhodopseudomonas palustris TIE-1.</title>
        <authorList>
            <consortium name="US DOE Joint Genome Institute"/>
            <person name="Lucas S."/>
            <person name="Copeland A."/>
            <person name="Lapidus A."/>
            <person name="Glavina del Rio T."/>
            <person name="Dalin E."/>
            <person name="Tice H."/>
            <person name="Pitluck S."/>
            <person name="Chain P."/>
            <person name="Malfatti S."/>
            <person name="Shin M."/>
            <person name="Vergez L."/>
            <person name="Lang D."/>
            <person name="Schmutz J."/>
            <person name="Larimer F."/>
            <person name="Land M."/>
            <person name="Hauser L."/>
            <person name="Kyrpides N."/>
            <person name="Mikhailova N."/>
            <person name="Emerson D."/>
            <person name="Newman D.K."/>
            <person name="Roden E."/>
            <person name="Richardson P."/>
        </authorList>
    </citation>
    <scope>NUCLEOTIDE SEQUENCE [LARGE SCALE GENOMIC DNA]</scope>
    <source>
        <strain>TIE-1</strain>
    </source>
</reference>
<protein>
    <recommendedName>
        <fullName evidence="1">Lipoyl synthase</fullName>
        <ecNumber evidence="1">2.8.1.8</ecNumber>
    </recommendedName>
    <alternativeName>
        <fullName evidence="1">Lip-syn</fullName>
        <shortName evidence="1">LS</shortName>
    </alternativeName>
    <alternativeName>
        <fullName evidence="1">Lipoate synthase</fullName>
    </alternativeName>
    <alternativeName>
        <fullName evidence="1">Lipoic acid synthase</fullName>
    </alternativeName>
    <alternativeName>
        <fullName evidence="1">Sulfur insertion protein LipA</fullName>
    </alternativeName>
</protein>
<keyword id="KW-0004">4Fe-4S</keyword>
<keyword id="KW-0963">Cytoplasm</keyword>
<keyword id="KW-0408">Iron</keyword>
<keyword id="KW-0411">Iron-sulfur</keyword>
<keyword id="KW-0479">Metal-binding</keyword>
<keyword id="KW-0949">S-adenosyl-L-methionine</keyword>
<keyword id="KW-0808">Transferase</keyword>
<organism>
    <name type="scientific">Rhodopseudomonas palustris (strain TIE-1)</name>
    <dbReference type="NCBI Taxonomy" id="395960"/>
    <lineage>
        <taxon>Bacteria</taxon>
        <taxon>Pseudomonadati</taxon>
        <taxon>Pseudomonadota</taxon>
        <taxon>Alphaproteobacteria</taxon>
        <taxon>Hyphomicrobiales</taxon>
        <taxon>Nitrobacteraceae</taxon>
        <taxon>Rhodopseudomonas</taxon>
    </lineage>
</organism>
<proteinExistence type="inferred from homology"/>
<gene>
    <name evidence="1" type="primary">lipA</name>
    <name type="ordered locus">Rpal_2857</name>
</gene>
<accession>B3QIL2</accession>
<sequence>MVVLVDTVSANPVRPRHPEKAARPDALSPKKPDWIRVRAPTTRGYGETRGIVKENGLHTVCEEAGCPNIGECWDKKHATFMIMGDTCTRACAFCNVKTGMPGALDANEPAYVAEATRKLGLQHLVITSVDRDDLADGGAAHFAATIRAVREACPTTTIEILTPDFLRKDGALEVVVAAKPDVFNHNLETVPSRYLSVRPGARYFHSIRLLQRVKELDPSIFTKSGIMVGLGEERHEVLQVMDDLRSAEVDFLTIGQYLQPTRKHHAVMRYVTPDEFAGYQTTAYAKGFLMVSASPMTRSSHHAGDDFAKLKAARAARAR</sequence>
<dbReference type="EC" id="2.8.1.8" evidence="1"/>
<dbReference type="EMBL" id="CP001096">
    <property type="protein sequence ID" value="ACF01365.1"/>
    <property type="molecule type" value="Genomic_DNA"/>
</dbReference>
<dbReference type="RefSeq" id="WP_011158137.1">
    <property type="nucleotide sequence ID" value="NC_011004.1"/>
</dbReference>
<dbReference type="SMR" id="B3QIL2"/>
<dbReference type="GeneID" id="66893656"/>
<dbReference type="KEGG" id="rpt:Rpal_2857"/>
<dbReference type="HOGENOM" id="CLU_033144_2_1_5"/>
<dbReference type="OrthoDB" id="9787898at2"/>
<dbReference type="UniPathway" id="UPA00538">
    <property type="reaction ID" value="UER00593"/>
</dbReference>
<dbReference type="Proteomes" id="UP000001725">
    <property type="component" value="Chromosome"/>
</dbReference>
<dbReference type="GO" id="GO:0005737">
    <property type="term" value="C:cytoplasm"/>
    <property type="evidence" value="ECO:0007669"/>
    <property type="project" value="UniProtKB-SubCell"/>
</dbReference>
<dbReference type="GO" id="GO:0051539">
    <property type="term" value="F:4 iron, 4 sulfur cluster binding"/>
    <property type="evidence" value="ECO:0007669"/>
    <property type="project" value="UniProtKB-UniRule"/>
</dbReference>
<dbReference type="GO" id="GO:0016992">
    <property type="term" value="F:lipoate synthase activity"/>
    <property type="evidence" value="ECO:0007669"/>
    <property type="project" value="UniProtKB-UniRule"/>
</dbReference>
<dbReference type="GO" id="GO:0046872">
    <property type="term" value="F:metal ion binding"/>
    <property type="evidence" value="ECO:0007669"/>
    <property type="project" value="UniProtKB-KW"/>
</dbReference>
<dbReference type="CDD" id="cd01335">
    <property type="entry name" value="Radical_SAM"/>
    <property type="match status" value="1"/>
</dbReference>
<dbReference type="FunFam" id="3.20.20.70:FF:000040">
    <property type="entry name" value="Lipoyl synthase"/>
    <property type="match status" value="1"/>
</dbReference>
<dbReference type="Gene3D" id="3.20.20.70">
    <property type="entry name" value="Aldolase class I"/>
    <property type="match status" value="1"/>
</dbReference>
<dbReference type="HAMAP" id="MF_00206">
    <property type="entry name" value="Lipoyl_synth"/>
    <property type="match status" value="1"/>
</dbReference>
<dbReference type="InterPro" id="IPR013785">
    <property type="entry name" value="Aldolase_TIM"/>
</dbReference>
<dbReference type="InterPro" id="IPR006638">
    <property type="entry name" value="Elp3/MiaA/NifB-like_rSAM"/>
</dbReference>
<dbReference type="InterPro" id="IPR003698">
    <property type="entry name" value="Lipoyl_synth"/>
</dbReference>
<dbReference type="InterPro" id="IPR007197">
    <property type="entry name" value="rSAM"/>
</dbReference>
<dbReference type="NCBIfam" id="TIGR00510">
    <property type="entry name" value="lipA"/>
    <property type="match status" value="1"/>
</dbReference>
<dbReference type="NCBIfam" id="NF004019">
    <property type="entry name" value="PRK05481.1"/>
    <property type="match status" value="1"/>
</dbReference>
<dbReference type="NCBIfam" id="NF009544">
    <property type="entry name" value="PRK12928.1"/>
    <property type="match status" value="1"/>
</dbReference>
<dbReference type="PANTHER" id="PTHR10949">
    <property type="entry name" value="LIPOYL SYNTHASE"/>
    <property type="match status" value="1"/>
</dbReference>
<dbReference type="PANTHER" id="PTHR10949:SF0">
    <property type="entry name" value="LIPOYL SYNTHASE, MITOCHONDRIAL"/>
    <property type="match status" value="1"/>
</dbReference>
<dbReference type="Pfam" id="PF04055">
    <property type="entry name" value="Radical_SAM"/>
    <property type="match status" value="1"/>
</dbReference>
<dbReference type="PIRSF" id="PIRSF005963">
    <property type="entry name" value="Lipoyl_synth"/>
    <property type="match status" value="1"/>
</dbReference>
<dbReference type="SFLD" id="SFLDF00271">
    <property type="entry name" value="lipoyl_synthase"/>
    <property type="match status" value="1"/>
</dbReference>
<dbReference type="SFLD" id="SFLDG01058">
    <property type="entry name" value="lipoyl_synthase_like"/>
    <property type="match status" value="1"/>
</dbReference>
<dbReference type="SMART" id="SM00729">
    <property type="entry name" value="Elp3"/>
    <property type="match status" value="1"/>
</dbReference>
<dbReference type="SUPFAM" id="SSF102114">
    <property type="entry name" value="Radical SAM enzymes"/>
    <property type="match status" value="1"/>
</dbReference>
<dbReference type="PROSITE" id="PS51918">
    <property type="entry name" value="RADICAL_SAM"/>
    <property type="match status" value="1"/>
</dbReference>
<name>LIPA_RHOPT</name>
<evidence type="ECO:0000255" key="1">
    <source>
        <dbReference type="HAMAP-Rule" id="MF_00206"/>
    </source>
</evidence>
<evidence type="ECO:0000255" key="2">
    <source>
        <dbReference type="PROSITE-ProRule" id="PRU01266"/>
    </source>
</evidence>
<evidence type="ECO:0000256" key="3">
    <source>
        <dbReference type="SAM" id="MobiDB-lite"/>
    </source>
</evidence>
<comment type="function">
    <text evidence="1">Catalyzes the radical-mediated insertion of two sulfur atoms into the C-6 and C-8 positions of the octanoyl moiety bound to the lipoyl domains of lipoate-dependent enzymes, thereby converting the octanoylated domains into lipoylated derivatives.</text>
</comment>
<comment type="catalytic activity">
    <reaction evidence="1">
        <text>[[Fe-S] cluster scaffold protein carrying a second [4Fe-4S](2+) cluster] + N(6)-octanoyl-L-lysyl-[protein] + 2 oxidized [2Fe-2S]-[ferredoxin] + 2 S-adenosyl-L-methionine + 4 H(+) = [[Fe-S] cluster scaffold protein] + N(6)-[(R)-dihydrolipoyl]-L-lysyl-[protein] + 4 Fe(3+) + 2 hydrogen sulfide + 2 5'-deoxyadenosine + 2 L-methionine + 2 reduced [2Fe-2S]-[ferredoxin]</text>
        <dbReference type="Rhea" id="RHEA:16585"/>
        <dbReference type="Rhea" id="RHEA-COMP:9928"/>
        <dbReference type="Rhea" id="RHEA-COMP:10000"/>
        <dbReference type="Rhea" id="RHEA-COMP:10001"/>
        <dbReference type="Rhea" id="RHEA-COMP:10475"/>
        <dbReference type="Rhea" id="RHEA-COMP:14568"/>
        <dbReference type="Rhea" id="RHEA-COMP:14569"/>
        <dbReference type="ChEBI" id="CHEBI:15378"/>
        <dbReference type="ChEBI" id="CHEBI:17319"/>
        <dbReference type="ChEBI" id="CHEBI:29034"/>
        <dbReference type="ChEBI" id="CHEBI:29919"/>
        <dbReference type="ChEBI" id="CHEBI:33722"/>
        <dbReference type="ChEBI" id="CHEBI:33737"/>
        <dbReference type="ChEBI" id="CHEBI:33738"/>
        <dbReference type="ChEBI" id="CHEBI:57844"/>
        <dbReference type="ChEBI" id="CHEBI:59789"/>
        <dbReference type="ChEBI" id="CHEBI:78809"/>
        <dbReference type="ChEBI" id="CHEBI:83100"/>
        <dbReference type="EC" id="2.8.1.8"/>
    </reaction>
</comment>
<comment type="cofactor">
    <cofactor evidence="1">
        <name>[4Fe-4S] cluster</name>
        <dbReference type="ChEBI" id="CHEBI:49883"/>
    </cofactor>
    <text evidence="1">Binds 2 [4Fe-4S] clusters per subunit. One cluster is coordinated with 3 cysteines and an exchangeable S-adenosyl-L-methionine.</text>
</comment>
<comment type="pathway">
    <text evidence="1">Protein modification; protein lipoylation via endogenous pathway; protein N(6)-(lipoyl)lysine from octanoyl-[acyl-carrier-protein]: step 2/2.</text>
</comment>
<comment type="subcellular location">
    <subcellularLocation>
        <location evidence="1">Cytoplasm</location>
    </subcellularLocation>
</comment>
<comment type="similarity">
    <text evidence="1">Belongs to the radical SAM superfamily. Lipoyl synthase family.</text>
</comment>
<feature type="chain" id="PRO_1000099626" description="Lipoyl synthase">
    <location>
        <begin position="1"/>
        <end position="319"/>
    </location>
</feature>
<feature type="domain" description="Radical SAM core" evidence="2">
    <location>
        <begin position="73"/>
        <end position="289"/>
    </location>
</feature>
<feature type="region of interest" description="Disordered" evidence="3">
    <location>
        <begin position="6"/>
        <end position="29"/>
    </location>
</feature>
<feature type="compositionally biased region" description="Basic and acidic residues" evidence="3">
    <location>
        <begin position="16"/>
        <end position="29"/>
    </location>
</feature>
<feature type="binding site" evidence="1">
    <location>
        <position position="61"/>
    </location>
    <ligand>
        <name>[4Fe-4S] cluster</name>
        <dbReference type="ChEBI" id="CHEBI:49883"/>
        <label>1</label>
    </ligand>
</feature>
<feature type="binding site" evidence="1">
    <location>
        <position position="66"/>
    </location>
    <ligand>
        <name>[4Fe-4S] cluster</name>
        <dbReference type="ChEBI" id="CHEBI:49883"/>
        <label>1</label>
    </ligand>
</feature>
<feature type="binding site" evidence="1">
    <location>
        <position position="72"/>
    </location>
    <ligand>
        <name>[4Fe-4S] cluster</name>
        <dbReference type="ChEBI" id="CHEBI:49883"/>
        <label>1</label>
    </ligand>
</feature>
<feature type="binding site" evidence="1">
    <location>
        <position position="87"/>
    </location>
    <ligand>
        <name>[4Fe-4S] cluster</name>
        <dbReference type="ChEBI" id="CHEBI:49883"/>
        <label>2</label>
        <note>4Fe-4S-S-AdoMet</note>
    </ligand>
</feature>
<feature type="binding site" evidence="1">
    <location>
        <position position="91"/>
    </location>
    <ligand>
        <name>[4Fe-4S] cluster</name>
        <dbReference type="ChEBI" id="CHEBI:49883"/>
        <label>2</label>
        <note>4Fe-4S-S-AdoMet</note>
    </ligand>
</feature>
<feature type="binding site" evidence="1">
    <location>
        <position position="94"/>
    </location>
    <ligand>
        <name>[4Fe-4S] cluster</name>
        <dbReference type="ChEBI" id="CHEBI:49883"/>
        <label>2</label>
        <note>4Fe-4S-S-AdoMet</note>
    </ligand>
</feature>
<feature type="binding site" evidence="1">
    <location>
        <position position="300"/>
    </location>
    <ligand>
        <name>[4Fe-4S] cluster</name>
        <dbReference type="ChEBI" id="CHEBI:49883"/>
        <label>1</label>
    </ligand>
</feature>